<protein>
    <recommendedName>
        <fullName>Nuclear receptor-binding factor 2</fullName>
        <shortName>NRBF-2</shortName>
    </recommendedName>
    <alternativeName>
        <fullName>Comodulator of PPAR and RXR</fullName>
    </alternativeName>
</protein>
<feature type="chain" id="PRO_0000235816" description="Nuclear receptor-binding factor 2">
    <location>
        <begin position="1"/>
        <end position="287"/>
    </location>
</feature>
<feature type="region of interest" description="Disordered" evidence="4">
    <location>
        <begin position="83"/>
        <end position="122"/>
    </location>
</feature>
<feature type="coiled-coil region" evidence="3">
    <location>
        <begin position="168"/>
        <end position="209"/>
    </location>
</feature>
<feature type="short sequence motif" description="Nuclear receptor interaction motif">
    <location>
        <begin position="141"/>
        <end position="145"/>
    </location>
</feature>
<feature type="compositionally biased region" description="Basic and acidic residues" evidence="4">
    <location>
        <begin position="83"/>
        <end position="95"/>
    </location>
</feature>
<feature type="compositionally biased region" description="Polar residues" evidence="4">
    <location>
        <begin position="113"/>
        <end position="122"/>
    </location>
</feature>
<feature type="modified residue" description="Phosphoserine" evidence="15">
    <location>
        <position position="113"/>
    </location>
</feature>
<feature type="modified residue" description="Phosphoserine" evidence="13 14">
    <location>
        <position position="268"/>
    </location>
</feature>
<feature type="splice variant" id="VSP_054555" description="In isoform 3." evidence="10">
    <original>MEVMEGPLNLAHQQSRRADRLLAAGKYEEAISCHKKAA</original>
    <variation>MFPGATTPLPKAAAYPGVYGSNGRTPQP</variation>
    <location>
        <begin position="1"/>
        <end position="38"/>
    </location>
</feature>
<feature type="splice variant" id="VSP_018488" description="In isoform 2." evidence="11">
    <location>
        <begin position="90"/>
        <end position="139"/>
    </location>
</feature>
<feature type="mutagenesis site" description="Decreased interaction with nuclear receptors." evidence="5">
    <original>LL</original>
    <variation>AA</variation>
    <location>
        <begin position="144"/>
        <end position="145"/>
    </location>
</feature>
<feature type="sequence conflict" description="In Ref. 4; BAB70833." evidence="12" ref="4">
    <original>E</original>
    <variation>G</variation>
    <location>
        <position position="150"/>
    </location>
</feature>
<feature type="sequence conflict" description="In Ref. 3; CAB66591." evidence="12" ref="3">
    <original>F</original>
    <variation>L</variation>
    <location>
        <position position="284"/>
    </location>
</feature>
<feature type="helix" evidence="16">
    <location>
        <begin position="7"/>
        <end position="23"/>
    </location>
</feature>
<feature type="helix" evidence="16">
    <location>
        <begin position="27"/>
        <end position="45"/>
    </location>
</feature>
<feature type="helix" evidence="16">
    <location>
        <begin position="51"/>
        <end position="85"/>
    </location>
</feature>
<sequence>MEVMEGPLNLAHQQSRRADRLLAAGKYEEAISCHKKAAAYLSEAMKLTQSEQAHLSLELQRDSHMKQLLLIQERWKRAQREERLKAQQNTDKDAAAHLQTSHKPSAEDAEGQSPLSQKYSPSTEKCLPEIQGIFDRDPDTLLYLLQQKSEPAEPCIGSKAPKDDKTIIEEQATKIADLKRHVEFLVAENERLRKENKQLKAEKARLLKGPIEKELDVDADFVETSELWSLPPHAETATASSTWQKFAANTGKAKDIPIPNLPPLDFPSPELPLMELSEDILKGFMNN</sequence>
<organism>
    <name type="scientific">Homo sapiens</name>
    <name type="common">Human</name>
    <dbReference type="NCBI Taxonomy" id="9606"/>
    <lineage>
        <taxon>Eukaryota</taxon>
        <taxon>Metazoa</taxon>
        <taxon>Chordata</taxon>
        <taxon>Craniata</taxon>
        <taxon>Vertebrata</taxon>
        <taxon>Euteleostomi</taxon>
        <taxon>Mammalia</taxon>
        <taxon>Eutheria</taxon>
        <taxon>Euarchontoglires</taxon>
        <taxon>Primates</taxon>
        <taxon>Haplorrhini</taxon>
        <taxon>Catarrhini</taxon>
        <taxon>Hominidae</taxon>
        <taxon>Homo</taxon>
    </lineage>
</organism>
<keyword id="KW-0002">3D-structure</keyword>
<keyword id="KW-0025">Alternative splicing</keyword>
<keyword id="KW-0072">Autophagy</keyword>
<keyword id="KW-0175">Coiled coil</keyword>
<keyword id="KW-0963">Cytoplasm</keyword>
<keyword id="KW-0968">Cytoplasmic vesicle</keyword>
<keyword id="KW-0539">Nucleus</keyword>
<keyword id="KW-0597">Phosphoprotein</keyword>
<keyword id="KW-1267">Proteomics identification</keyword>
<keyword id="KW-1185">Reference proteome</keyword>
<keyword id="KW-0804">Transcription</keyword>
<keyword id="KW-0805">Transcription regulation</keyword>
<gene>
    <name type="primary">NRBF2</name>
    <name type="synonym">COPR</name>
</gene>
<dbReference type="EMBL" id="AY267839">
    <property type="protein sequence ID" value="AAP03081.1"/>
    <property type="molecule type" value="mRNA"/>
</dbReference>
<dbReference type="EMBL" id="AY267840">
    <property type="protein sequence ID" value="AAP03082.1"/>
    <property type="molecule type" value="mRNA"/>
</dbReference>
<dbReference type="EMBL" id="AF267866">
    <property type="protein sequence ID" value="AAG44735.1"/>
    <property type="status" value="ALT_FRAME"/>
    <property type="molecule type" value="mRNA"/>
</dbReference>
<dbReference type="EMBL" id="AL136656">
    <property type="protein sequence ID" value="CAB66591.1"/>
    <property type="molecule type" value="mRNA"/>
</dbReference>
<dbReference type="EMBL" id="AK054957">
    <property type="protein sequence ID" value="BAB70833.1"/>
    <property type="molecule type" value="mRNA"/>
</dbReference>
<dbReference type="EMBL" id="AK301656">
    <property type="protein sequence ID" value="BAG63132.1"/>
    <property type="molecule type" value="mRNA"/>
</dbReference>
<dbReference type="EMBL" id="AL590502">
    <property type="status" value="NOT_ANNOTATED_CDS"/>
    <property type="molecule type" value="Genomic_DNA"/>
</dbReference>
<dbReference type="EMBL" id="CH471083">
    <property type="protein sequence ID" value="EAW54241.1"/>
    <property type="molecule type" value="Genomic_DNA"/>
</dbReference>
<dbReference type="EMBL" id="BC011707">
    <property type="protein sequence ID" value="AAH11707.1"/>
    <property type="molecule type" value="mRNA"/>
</dbReference>
<dbReference type="CCDS" id="CCDS60537.1">
    <molecule id="Q96F24-3"/>
</dbReference>
<dbReference type="CCDS" id="CCDS7268.1">
    <molecule id="Q96F24-1"/>
</dbReference>
<dbReference type="RefSeq" id="NP_001269334.1">
    <molecule id="Q96F24-3"/>
    <property type="nucleotide sequence ID" value="NM_001282405.2"/>
</dbReference>
<dbReference type="RefSeq" id="NP_110386.2">
    <molecule id="Q96F24-1"/>
    <property type="nucleotide sequence ID" value="NM_030759.5"/>
</dbReference>
<dbReference type="PDB" id="4ZEY">
    <property type="method" value="X-ray"/>
    <property type="resolution" value="1.50 A"/>
    <property type="chains" value="A=4-86"/>
</dbReference>
<dbReference type="PDBsum" id="4ZEY"/>
<dbReference type="SMR" id="Q96F24"/>
<dbReference type="BioGRID" id="119009">
    <property type="interactions" value="78"/>
</dbReference>
<dbReference type="CORUM" id="Q96F24"/>
<dbReference type="FunCoup" id="Q96F24">
    <property type="interactions" value="3073"/>
</dbReference>
<dbReference type="IntAct" id="Q96F24">
    <property type="interactions" value="48"/>
</dbReference>
<dbReference type="MINT" id="Q96F24"/>
<dbReference type="STRING" id="9606.ENSP00000277746"/>
<dbReference type="ChEMBL" id="CHEMBL4295924"/>
<dbReference type="GlyGen" id="Q96F24">
    <property type="glycosylation" value="1 site, 1 O-linked glycan (1 site)"/>
</dbReference>
<dbReference type="iPTMnet" id="Q96F24"/>
<dbReference type="PhosphoSitePlus" id="Q96F24"/>
<dbReference type="BioMuta" id="NRBF2"/>
<dbReference type="DMDM" id="74731648"/>
<dbReference type="jPOST" id="Q96F24"/>
<dbReference type="MassIVE" id="Q96F24"/>
<dbReference type="PaxDb" id="9606-ENSP00000277746"/>
<dbReference type="PeptideAtlas" id="Q96F24"/>
<dbReference type="ProteomicsDB" id="5374"/>
<dbReference type="ProteomicsDB" id="76486">
    <molecule id="Q96F24-1"/>
</dbReference>
<dbReference type="ProteomicsDB" id="76487">
    <molecule id="Q96F24-2"/>
</dbReference>
<dbReference type="Pumba" id="Q96F24"/>
<dbReference type="Antibodypedia" id="28311">
    <property type="antibodies" value="339 antibodies from 31 providers"/>
</dbReference>
<dbReference type="DNASU" id="29982"/>
<dbReference type="Ensembl" id="ENST00000277746.11">
    <molecule id="Q96F24-1"/>
    <property type="protein sequence ID" value="ENSP00000277746.6"/>
    <property type="gene ID" value="ENSG00000148572.16"/>
</dbReference>
<dbReference type="Ensembl" id="ENST00000435510.6">
    <molecule id="Q96F24-3"/>
    <property type="protein sequence ID" value="ENSP00000397502.2"/>
    <property type="gene ID" value="ENSG00000148572.16"/>
</dbReference>
<dbReference type="GeneID" id="29982"/>
<dbReference type="KEGG" id="hsa:29982"/>
<dbReference type="MANE-Select" id="ENST00000277746.11">
    <property type="protein sequence ID" value="ENSP00000277746.6"/>
    <property type="RefSeq nucleotide sequence ID" value="NM_030759.5"/>
    <property type="RefSeq protein sequence ID" value="NP_110386.2"/>
</dbReference>
<dbReference type="UCSC" id="uc001jmj.6">
    <molecule id="Q96F24-1"/>
    <property type="organism name" value="human"/>
</dbReference>
<dbReference type="AGR" id="HGNC:19692"/>
<dbReference type="CTD" id="29982"/>
<dbReference type="DisGeNET" id="29982"/>
<dbReference type="GeneCards" id="NRBF2"/>
<dbReference type="HGNC" id="HGNC:19692">
    <property type="gene designation" value="NRBF2"/>
</dbReference>
<dbReference type="HPA" id="ENSG00000148572">
    <property type="expression patterns" value="Low tissue specificity"/>
</dbReference>
<dbReference type="MIM" id="616477">
    <property type="type" value="gene"/>
</dbReference>
<dbReference type="neXtProt" id="NX_Q96F24"/>
<dbReference type="OpenTargets" id="ENSG00000148572"/>
<dbReference type="PharmGKB" id="PA134946285"/>
<dbReference type="VEuPathDB" id="HostDB:ENSG00000148572"/>
<dbReference type="eggNOG" id="ENOG502QRE0">
    <property type="taxonomic scope" value="Eukaryota"/>
</dbReference>
<dbReference type="GeneTree" id="ENSGT00390000000984"/>
<dbReference type="HOGENOM" id="CLU_098323_0_0_1"/>
<dbReference type="InParanoid" id="Q96F24"/>
<dbReference type="OMA" id="KCHETVA"/>
<dbReference type="OrthoDB" id="3694230at2759"/>
<dbReference type="PAN-GO" id="Q96F24">
    <property type="GO annotations" value="1 GO annotation based on evolutionary models"/>
</dbReference>
<dbReference type="PhylomeDB" id="Q96F24"/>
<dbReference type="TreeFam" id="TF328627"/>
<dbReference type="PathwayCommons" id="Q96F24"/>
<dbReference type="Reactome" id="R-HSA-383280">
    <property type="pathway name" value="Nuclear Receptor transcription pathway"/>
</dbReference>
<dbReference type="SignaLink" id="Q96F24"/>
<dbReference type="SIGNOR" id="Q96F24"/>
<dbReference type="BioGRID-ORCS" id="29982">
    <property type="hits" value="113 hits in 1092 CRISPR screens"/>
</dbReference>
<dbReference type="ChiTaRS" id="NRBF2">
    <property type="organism name" value="human"/>
</dbReference>
<dbReference type="EvolutionaryTrace" id="Q96F24"/>
<dbReference type="GeneWiki" id="NRBF2"/>
<dbReference type="GenomeRNAi" id="29982"/>
<dbReference type="Pharos" id="Q96F24">
    <property type="development level" value="Tbio"/>
</dbReference>
<dbReference type="PRO" id="PR:Q96F24"/>
<dbReference type="Proteomes" id="UP000005640">
    <property type="component" value="Chromosome 10"/>
</dbReference>
<dbReference type="RNAct" id="Q96F24">
    <property type="molecule type" value="protein"/>
</dbReference>
<dbReference type="Bgee" id="ENSG00000148572">
    <property type="expression patterns" value="Expressed in buccal mucosa cell and 191 other cell types or tissues"/>
</dbReference>
<dbReference type="GO" id="GO:0005776">
    <property type="term" value="C:autophagosome"/>
    <property type="evidence" value="ECO:0007669"/>
    <property type="project" value="UniProtKB-SubCell"/>
</dbReference>
<dbReference type="GO" id="GO:0005737">
    <property type="term" value="C:cytoplasm"/>
    <property type="evidence" value="ECO:0000314"/>
    <property type="project" value="LIFEdb"/>
</dbReference>
<dbReference type="GO" id="GO:0031410">
    <property type="term" value="C:cytoplasmic vesicle"/>
    <property type="evidence" value="ECO:0007669"/>
    <property type="project" value="UniProtKB-KW"/>
</dbReference>
<dbReference type="GO" id="GO:0005654">
    <property type="term" value="C:nucleoplasm"/>
    <property type="evidence" value="ECO:0000304"/>
    <property type="project" value="Reactome"/>
</dbReference>
<dbReference type="GO" id="GO:0035032">
    <property type="term" value="C:phosphatidylinositol 3-kinase complex, class III"/>
    <property type="evidence" value="ECO:0007669"/>
    <property type="project" value="Ensembl"/>
</dbReference>
<dbReference type="GO" id="GO:0006914">
    <property type="term" value="P:autophagy"/>
    <property type="evidence" value="ECO:0000315"/>
    <property type="project" value="GO_Central"/>
</dbReference>
<dbReference type="GO" id="GO:0034976">
    <property type="term" value="P:response to endoplasmic reticulum stress"/>
    <property type="evidence" value="ECO:0007669"/>
    <property type="project" value="Ensembl"/>
</dbReference>
<dbReference type="FunFam" id="1.20.58.80:FF:000018">
    <property type="entry name" value="nuclear receptor-binding factor 2 isoform X1"/>
    <property type="match status" value="1"/>
</dbReference>
<dbReference type="Gene3D" id="1.20.58.80">
    <property type="entry name" value="Phosphotransferase system, lactose/cellobiose-type IIA subunit"/>
    <property type="match status" value="1"/>
</dbReference>
<dbReference type="IDEAL" id="IID00676"/>
<dbReference type="InterPro" id="IPR039679">
    <property type="entry name" value="NRBF2"/>
</dbReference>
<dbReference type="InterPro" id="IPR015056">
    <property type="entry name" value="NRBF2_C"/>
</dbReference>
<dbReference type="InterPro" id="IPR033393">
    <property type="entry name" value="NRBF2_MIT"/>
</dbReference>
<dbReference type="PANTHER" id="PTHR14964">
    <property type="entry name" value="NUCLEAR RECEPTOR BINDING FACTOR 2"/>
    <property type="match status" value="1"/>
</dbReference>
<dbReference type="PANTHER" id="PTHR14964:SF5">
    <property type="entry name" value="NUCLEAR RECEPTOR-BINDING FACTOR 2"/>
    <property type="match status" value="1"/>
</dbReference>
<dbReference type="Pfam" id="PF08961">
    <property type="entry name" value="NRBF2"/>
    <property type="match status" value="1"/>
</dbReference>
<dbReference type="Pfam" id="PF17169">
    <property type="entry name" value="NRBF2_MIT"/>
    <property type="match status" value="1"/>
</dbReference>
<dbReference type="SUPFAM" id="SSF140361">
    <property type="entry name" value="MIT domain-like"/>
    <property type="match status" value="1"/>
</dbReference>
<proteinExistence type="evidence at protein level"/>
<reference key="1">
    <citation type="journal article" date="2004" name="J. Invest. Dermatol.">
        <title>Isolation and functional analysis of a keratinocyte-derived, ligand-regulated nuclear receptor comodulator.</title>
        <authorList>
            <person name="Flores A.M."/>
            <person name="Li L."/>
            <person name="Aneskievich B.J."/>
        </authorList>
    </citation>
    <scope>NUCLEOTIDE SEQUENCE [MRNA] (ISOFORMS 1 AND 2)</scope>
    <scope>FUNCTION</scope>
    <scope>MUTAGENESIS OF 144-LEU-LEU-145</scope>
    <scope>INTERACTION WITH PPARA; PPARD; PPARG; RARA; RARG AND RXRA</scope>
    <scope>TISSUE SPECIFICITY</scope>
    <source>
        <tissue>Keratinocyte</tissue>
    </source>
</reference>
<reference key="2">
    <citation type="submission" date="2000-05" db="EMBL/GenBank/DDBJ databases">
        <authorList>
            <person name="Xu X."/>
            <person name="Yang Y."/>
            <person name="Gao G."/>
            <person name="Xiao H."/>
            <person name="Chen Z."/>
            <person name="Han Z."/>
        </authorList>
    </citation>
    <scope>NUCLEOTIDE SEQUENCE [LARGE SCALE MRNA] (ISOFORM 1)</scope>
    <source>
        <tissue>Dendritic cell</tissue>
    </source>
</reference>
<reference key="3">
    <citation type="journal article" date="2001" name="Genome Res.">
        <title>Towards a catalog of human genes and proteins: sequencing and analysis of 500 novel complete protein coding human cDNAs.</title>
        <authorList>
            <person name="Wiemann S."/>
            <person name="Weil B."/>
            <person name="Wellenreuther R."/>
            <person name="Gassenhuber J."/>
            <person name="Glassl S."/>
            <person name="Ansorge W."/>
            <person name="Boecher M."/>
            <person name="Bloecker H."/>
            <person name="Bauersachs S."/>
            <person name="Blum H."/>
            <person name="Lauber J."/>
            <person name="Duesterhoeft A."/>
            <person name="Beyer A."/>
            <person name="Koehrer K."/>
            <person name="Strack N."/>
            <person name="Mewes H.-W."/>
            <person name="Ottenwaelder B."/>
            <person name="Obermaier B."/>
            <person name="Tampe J."/>
            <person name="Heubner D."/>
            <person name="Wambutt R."/>
            <person name="Korn B."/>
            <person name="Klein M."/>
            <person name="Poustka A."/>
        </authorList>
    </citation>
    <scope>NUCLEOTIDE SEQUENCE [LARGE SCALE MRNA] (ISOFORM 1)</scope>
    <source>
        <tissue>Brain</tissue>
    </source>
</reference>
<reference key="4">
    <citation type="journal article" date="2004" name="Nat. Genet.">
        <title>Complete sequencing and characterization of 21,243 full-length human cDNAs.</title>
        <authorList>
            <person name="Ota T."/>
            <person name="Suzuki Y."/>
            <person name="Nishikawa T."/>
            <person name="Otsuki T."/>
            <person name="Sugiyama T."/>
            <person name="Irie R."/>
            <person name="Wakamatsu A."/>
            <person name="Hayashi K."/>
            <person name="Sato H."/>
            <person name="Nagai K."/>
            <person name="Kimura K."/>
            <person name="Makita H."/>
            <person name="Sekine M."/>
            <person name="Obayashi M."/>
            <person name="Nishi T."/>
            <person name="Shibahara T."/>
            <person name="Tanaka T."/>
            <person name="Ishii S."/>
            <person name="Yamamoto J."/>
            <person name="Saito K."/>
            <person name="Kawai Y."/>
            <person name="Isono Y."/>
            <person name="Nakamura Y."/>
            <person name="Nagahari K."/>
            <person name="Murakami K."/>
            <person name="Yasuda T."/>
            <person name="Iwayanagi T."/>
            <person name="Wagatsuma M."/>
            <person name="Shiratori A."/>
            <person name="Sudo H."/>
            <person name="Hosoiri T."/>
            <person name="Kaku Y."/>
            <person name="Kodaira H."/>
            <person name="Kondo H."/>
            <person name="Sugawara M."/>
            <person name="Takahashi M."/>
            <person name="Kanda K."/>
            <person name="Yokoi T."/>
            <person name="Furuya T."/>
            <person name="Kikkawa E."/>
            <person name="Omura Y."/>
            <person name="Abe K."/>
            <person name="Kamihara K."/>
            <person name="Katsuta N."/>
            <person name="Sato K."/>
            <person name="Tanikawa M."/>
            <person name="Yamazaki M."/>
            <person name="Ninomiya K."/>
            <person name="Ishibashi T."/>
            <person name="Yamashita H."/>
            <person name="Murakawa K."/>
            <person name="Fujimori K."/>
            <person name="Tanai H."/>
            <person name="Kimata M."/>
            <person name="Watanabe M."/>
            <person name="Hiraoka S."/>
            <person name="Chiba Y."/>
            <person name="Ishida S."/>
            <person name="Ono Y."/>
            <person name="Takiguchi S."/>
            <person name="Watanabe S."/>
            <person name="Yosida M."/>
            <person name="Hotuta T."/>
            <person name="Kusano J."/>
            <person name="Kanehori K."/>
            <person name="Takahashi-Fujii A."/>
            <person name="Hara H."/>
            <person name="Tanase T.-O."/>
            <person name="Nomura Y."/>
            <person name="Togiya S."/>
            <person name="Komai F."/>
            <person name="Hara R."/>
            <person name="Takeuchi K."/>
            <person name="Arita M."/>
            <person name="Imose N."/>
            <person name="Musashino K."/>
            <person name="Yuuki H."/>
            <person name="Oshima A."/>
            <person name="Sasaki N."/>
            <person name="Aotsuka S."/>
            <person name="Yoshikawa Y."/>
            <person name="Matsunawa H."/>
            <person name="Ichihara T."/>
            <person name="Shiohata N."/>
            <person name="Sano S."/>
            <person name="Moriya S."/>
            <person name="Momiyama H."/>
            <person name="Satoh N."/>
            <person name="Takami S."/>
            <person name="Terashima Y."/>
            <person name="Suzuki O."/>
            <person name="Nakagawa S."/>
            <person name="Senoh A."/>
            <person name="Mizoguchi H."/>
            <person name="Goto Y."/>
            <person name="Shimizu F."/>
            <person name="Wakebe H."/>
            <person name="Hishigaki H."/>
            <person name="Watanabe T."/>
            <person name="Sugiyama A."/>
            <person name="Takemoto M."/>
            <person name="Kawakami B."/>
            <person name="Yamazaki M."/>
            <person name="Watanabe K."/>
            <person name="Kumagai A."/>
            <person name="Itakura S."/>
            <person name="Fukuzumi Y."/>
            <person name="Fujimori Y."/>
            <person name="Komiyama M."/>
            <person name="Tashiro H."/>
            <person name="Tanigami A."/>
            <person name="Fujiwara T."/>
            <person name="Ono T."/>
            <person name="Yamada K."/>
            <person name="Fujii Y."/>
            <person name="Ozaki K."/>
            <person name="Hirao M."/>
            <person name="Ohmori Y."/>
            <person name="Kawabata A."/>
            <person name="Hikiji T."/>
            <person name="Kobatake N."/>
            <person name="Inagaki H."/>
            <person name="Ikema Y."/>
            <person name="Okamoto S."/>
            <person name="Okitani R."/>
            <person name="Kawakami T."/>
            <person name="Noguchi S."/>
            <person name="Itoh T."/>
            <person name="Shigeta K."/>
            <person name="Senba T."/>
            <person name="Matsumura K."/>
            <person name="Nakajima Y."/>
            <person name="Mizuno T."/>
            <person name="Morinaga M."/>
            <person name="Sasaki M."/>
            <person name="Togashi T."/>
            <person name="Oyama M."/>
            <person name="Hata H."/>
            <person name="Watanabe M."/>
            <person name="Komatsu T."/>
            <person name="Mizushima-Sugano J."/>
            <person name="Satoh T."/>
            <person name="Shirai Y."/>
            <person name="Takahashi Y."/>
            <person name="Nakagawa K."/>
            <person name="Okumura K."/>
            <person name="Nagase T."/>
            <person name="Nomura N."/>
            <person name="Kikuchi H."/>
            <person name="Masuho Y."/>
            <person name="Yamashita R."/>
            <person name="Nakai K."/>
            <person name="Yada T."/>
            <person name="Nakamura Y."/>
            <person name="Ohara O."/>
            <person name="Isogai T."/>
            <person name="Sugano S."/>
        </authorList>
    </citation>
    <scope>NUCLEOTIDE SEQUENCE [LARGE SCALE MRNA] (ISOFORMS 1 AND 3)</scope>
    <source>
        <tissue>Cerebellum</tissue>
        <tissue>Esophagus</tissue>
    </source>
</reference>
<reference key="5">
    <citation type="journal article" date="2004" name="Nature">
        <title>The DNA sequence and comparative analysis of human chromosome 10.</title>
        <authorList>
            <person name="Deloukas P."/>
            <person name="Earthrowl M.E."/>
            <person name="Grafham D.V."/>
            <person name="Rubenfield M."/>
            <person name="French L."/>
            <person name="Steward C.A."/>
            <person name="Sims S.K."/>
            <person name="Jones M.C."/>
            <person name="Searle S."/>
            <person name="Scott C."/>
            <person name="Howe K."/>
            <person name="Hunt S.E."/>
            <person name="Andrews T.D."/>
            <person name="Gilbert J.G.R."/>
            <person name="Swarbreck D."/>
            <person name="Ashurst J.L."/>
            <person name="Taylor A."/>
            <person name="Battles J."/>
            <person name="Bird C.P."/>
            <person name="Ainscough R."/>
            <person name="Almeida J.P."/>
            <person name="Ashwell R.I.S."/>
            <person name="Ambrose K.D."/>
            <person name="Babbage A.K."/>
            <person name="Bagguley C.L."/>
            <person name="Bailey J."/>
            <person name="Banerjee R."/>
            <person name="Bates K."/>
            <person name="Beasley H."/>
            <person name="Bray-Allen S."/>
            <person name="Brown A.J."/>
            <person name="Brown J.Y."/>
            <person name="Burford D.C."/>
            <person name="Burrill W."/>
            <person name="Burton J."/>
            <person name="Cahill P."/>
            <person name="Camire D."/>
            <person name="Carter N.P."/>
            <person name="Chapman J.C."/>
            <person name="Clark S.Y."/>
            <person name="Clarke G."/>
            <person name="Clee C.M."/>
            <person name="Clegg S."/>
            <person name="Corby N."/>
            <person name="Coulson A."/>
            <person name="Dhami P."/>
            <person name="Dutta I."/>
            <person name="Dunn M."/>
            <person name="Faulkner L."/>
            <person name="Frankish A."/>
            <person name="Frankland J.A."/>
            <person name="Garner P."/>
            <person name="Garnett J."/>
            <person name="Gribble S."/>
            <person name="Griffiths C."/>
            <person name="Grocock R."/>
            <person name="Gustafson E."/>
            <person name="Hammond S."/>
            <person name="Harley J.L."/>
            <person name="Hart E."/>
            <person name="Heath P.D."/>
            <person name="Ho T.P."/>
            <person name="Hopkins B."/>
            <person name="Horne J."/>
            <person name="Howden P.J."/>
            <person name="Huckle E."/>
            <person name="Hynds C."/>
            <person name="Johnson C."/>
            <person name="Johnson D."/>
            <person name="Kana A."/>
            <person name="Kay M."/>
            <person name="Kimberley A.M."/>
            <person name="Kershaw J.K."/>
            <person name="Kokkinaki M."/>
            <person name="Laird G.K."/>
            <person name="Lawlor S."/>
            <person name="Lee H.M."/>
            <person name="Leongamornlert D.A."/>
            <person name="Laird G."/>
            <person name="Lloyd C."/>
            <person name="Lloyd D.M."/>
            <person name="Loveland J."/>
            <person name="Lovell J."/>
            <person name="McLaren S."/>
            <person name="McLay K.E."/>
            <person name="McMurray A."/>
            <person name="Mashreghi-Mohammadi M."/>
            <person name="Matthews L."/>
            <person name="Milne S."/>
            <person name="Nickerson T."/>
            <person name="Nguyen M."/>
            <person name="Overton-Larty E."/>
            <person name="Palmer S.A."/>
            <person name="Pearce A.V."/>
            <person name="Peck A.I."/>
            <person name="Pelan S."/>
            <person name="Phillimore B."/>
            <person name="Porter K."/>
            <person name="Rice C.M."/>
            <person name="Rogosin A."/>
            <person name="Ross M.T."/>
            <person name="Sarafidou T."/>
            <person name="Sehra H.K."/>
            <person name="Shownkeen R."/>
            <person name="Skuce C.D."/>
            <person name="Smith M."/>
            <person name="Standring L."/>
            <person name="Sycamore N."/>
            <person name="Tester J."/>
            <person name="Thorpe A."/>
            <person name="Torcasso W."/>
            <person name="Tracey A."/>
            <person name="Tromans A."/>
            <person name="Tsolas J."/>
            <person name="Wall M."/>
            <person name="Walsh J."/>
            <person name="Wang H."/>
            <person name="Weinstock K."/>
            <person name="West A.P."/>
            <person name="Willey D.L."/>
            <person name="Whitehead S.L."/>
            <person name="Wilming L."/>
            <person name="Wray P.W."/>
            <person name="Young L."/>
            <person name="Chen Y."/>
            <person name="Lovering R.C."/>
            <person name="Moschonas N.K."/>
            <person name="Siebert R."/>
            <person name="Fechtel K."/>
            <person name="Bentley D."/>
            <person name="Durbin R.M."/>
            <person name="Hubbard T."/>
            <person name="Doucette-Stamm L."/>
            <person name="Beck S."/>
            <person name="Smith D.R."/>
            <person name="Rogers J."/>
        </authorList>
    </citation>
    <scope>NUCLEOTIDE SEQUENCE [LARGE SCALE GENOMIC DNA]</scope>
</reference>
<reference key="6">
    <citation type="submission" date="2005-07" db="EMBL/GenBank/DDBJ databases">
        <authorList>
            <person name="Mural R.J."/>
            <person name="Istrail S."/>
            <person name="Sutton G.G."/>
            <person name="Florea L."/>
            <person name="Halpern A.L."/>
            <person name="Mobarry C.M."/>
            <person name="Lippert R."/>
            <person name="Walenz B."/>
            <person name="Shatkay H."/>
            <person name="Dew I."/>
            <person name="Miller J.R."/>
            <person name="Flanigan M.J."/>
            <person name="Edwards N.J."/>
            <person name="Bolanos R."/>
            <person name="Fasulo D."/>
            <person name="Halldorsson B.V."/>
            <person name="Hannenhalli S."/>
            <person name="Turner R."/>
            <person name="Yooseph S."/>
            <person name="Lu F."/>
            <person name="Nusskern D.R."/>
            <person name="Shue B.C."/>
            <person name="Zheng X.H."/>
            <person name="Zhong F."/>
            <person name="Delcher A.L."/>
            <person name="Huson D.H."/>
            <person name="Kravitz S.A."/>
            <person name="Mouchard L."/>
            <person name="Reinert K."/>
            <person name="Remington K.A."/>
            <person name="Clark A.G."/>
            <person name="Waterman M.S."/>
            <person name="Eichler E.E."/>
            <person name="Adams M.D."/>
            <person name="Hunkapiller M.W."/>
            <person name="Myers E.W."/>
            <person name="Venter J.C."/>
        </authorList>
    </citation>
    <scope>NUCLEOTIDE SEQUENCE [LARGE SCALE GENOMIC DNA]</scope>
</reference>
<reference key="7">
    <citation type="journal article" date="2004" name="Genome Res.">
        <title>The status, quality, and expansion of the NIH full-length cDNA project: the Mammalian Gene Collection (MGC).</title>
        <authorList>
            <consortium name="The MGC Project Team"/>
        </authorList>
    </citation>
    <scope>NUCLEOTIDE SEQUENCE [LARGE SCALE MRNA] (ISOFORM 1)</scope>
    <source>
        <tissue>Lymph</tissue>
    </source>
</reference>
<reference key="8">
    <citation type="journal article" date="2008" name="Mol. Cell">
        <title>Kinase-selective enrichment enables quantitative phosphoproteomics of the kinome across the cell cycle.</title>
        <authorList>
            <person name="Daub H."/>
            <person name="Olsen J.V."/>
            <person name="Bairlein M."/>
            <person name="Gnad F."/>
            <person name="Oppermann F.S."/>
            <person name="Korner R."/>
            <person name="Greff Z."/>
            <person name="Keri G."/>
            <person name="Stemmann O."/>
            <person name="Mann M."/>
        </authorList>
    </citation>
    <scope>PHOSPHORYLATION [LARGE SCALE ANALYSIS] AT SER-268</scope>
    <scope>IDENTIFICATION BY MASS SPECTROMETRY [LARGE SCALE ANALYSIS]</scope>
    <source>
        <tissue>Cervix carcinoma</tissue>
    </source>
</reference>
<reference key="9">
    <citation type="journal article" date="2008" name="Mol. Cell. Neurosci.">
        <title>Nuclear receptor binding protein 2 is induced during neural progenitor differentiation and affects cell survival.</title>
        <authorList>
            <person name="Larsson J."/>
            <person name="Forsberg M."/>
            <person name="Brannvall K."/>
            <person name="Zhang X.Q."/>
            <person name="Enarsson M."/>
            <person name="Hedborg F."/>
            <person name="Forsberg-Nilsson K."/>
        </authorList>
    </citation>
    <scope>TISSUE SPECIFICITY</scope>
</reference>
<reference key="10">
    <citation type="journal article" date="2009" name="Anal. Chem.">
        <title>Lys-N and trypsin cover complementary parts of the phosphoproteome in a refined SCX-based approach.</title>
        <authorList>
            <person name="Gauci S."/>
            <person name="Helbig A.O."/>
            <person name="Slijper M."/>
            <person name="Krijgsveld J."/>
            <person name="Heck A.J."/>
            <person name="Mohammed S."/>
        </authorList>
    </citation>
    <scope>IDENTIFICATION BY MASS SPECTROMETRY [LARGE SCALE ANALYSIS]</scope>
</reference>
<reference key="11">
    <citation type="journal article" date="2009" name="Mol. Cell. Proteomics">
        <title>Large-scale proteomics analysis of the human kinome.</title>
        <authorList>
            <person name="Oppermann F.S."/>
            <person name="Gnad F."/>
            <person name="Olsen J.V."/>
            <person name="Hornberger R."/>
            <person name="Greff Z."/>
            <person name="Keri G."/>
            <person name="Mann M."/>
            <person name="Daub H."/>
        </authorList>
    </citation>
    <scope>PHOSPHORYLATION [LARGE SCALE ANALYSIS] AT SER-268</scope>
    <scope>IDENTIFICATION BY MASS SPECTROMETRY [LARGE SCALE ANALYSIS]</scope>
</reference>
<reference key="12">
    <citation type="journal article" date="2011" name="Sci. Signal.">
        <title>System-wide temporal characterization of the proteome and phosphoproteome of human embryonic stem cell differentiation.</title>
        <authorList>
            <person name="Rigbolt K.T."/>
            <person name="Prokhorova T.A."/>
            <person name="Akimov V."/>
            <person name="Henningsen J."/>
            <person name="Johansen P.T."/>
            <person name="Kratchmarova I."/>
            <person name="Kassem M."/>
            <person name="Mann M."/>
            <person name="Olsen J.V."/>
            <person name="Blagoev B."/>
        </authorList>
    </citation>
    <scope>IDENTIFICATION BY MASS SPECTROMETRY [LARGE SCALE ANALYSIS]</scope>
</reference>
<reference key="13">
    <citation type="journal article" date="2012" name="EMBO J.">
        <title>Genome-wide siRNA screen reveals amino acid starvation-induced autophagy requires SCOC and WAC.</title>
        <authorList>
            <person name="McKnight N.C."/>
            <person name="Jefferies H.B."/>
            <person name="Alemu E.A."/>
            <person name="Saunders R.E."/>
            <person name="Howell M."/>
            <person name="Johansen T."/>
            <person name="Tooze S.A."/>
        </authorList>
    </citation>
    <scope>INTERACTION WITH SCOC</scope>
</reference>
<reference key="14">
    <citation type="journal article" date="2013" name="J. Proteome Res.">
        <title>Toward a comprehensive characterization of a human cancer cell phosphoproteome.</title>
        <authorList>
            <person name="Zhou H."/>
            <person name="Di Palma S."/>
            <person name="Preisinger C."/>
            <person name="Peng M."/>
            <person name="Polat A.N."/>
            <person name="Heck A.J."/>
            <person name="Mohammed S."/>
        </authorList>
    </citation>
    <scope>PHOSPHORYLATION [LARGE SCALE ANALYSIS] AT SER-113</scope>
    <scope>IDENTIFICATION BY MASS SPECTROMETRY [LARGE SCALE ANALYSIS]</scope>
    <source>
        <tissue>Cervix carcinoma</tissue>
        <tissue>Erythroleukemia</tissue>
    </source>
</reference>
<reference key="15">
    <citation type="journal article" date="2014" name="Biochem. J.">
        <title>NRBF2 regulates macroautophagy as a component of Vps34 Complex I.</title>
        <authorList>
            <person name="Cao Y."/>
            <person name="Wang Y."/>
            <person name="Abi Saab W.F."/>
            <person name="Yang F."/>
            <person name="Pessin J.E."/>
            <person name="Backer J.M."/>
        </authorList>
    </citation>
    <scope>FUNCTION</scope>
    <scope>INTERACTION WITH PIK3R4</scope>
    <scope>SUBUNIT</scope>
</reference>
<reference key="16">
    <citation type="journal article" date="2014" name="J. Biol. Chem.">
        <title>Nrbf2 protein suppresses autophagy by modulating Atg14L protein-containing Beclin 1-Vps34 complex architecture and reducing intracellular phosphatidylinositol-3 phosphate levels.</title>
        <authorList>
            <person name="Zhong Y."/>
            <person name="Morris D.H."/>
            <person name="Jin L."/>
            <person name="Patel M.S."/>
            <person name="Karunakaran S.K."/>
            <person name="Fu Y.J."/>
            <person name="Matuszak E.A."/>
            <person name="Weiss H.L."/>
            <person name="Chait B.T."/>
            <person name="Wang Q.J."/>
        </authorList>
    </citation>
    <scope>FUNCTION</scope>
    <scope>SUBUNIT</scope>
    <scope>SUBCELLULAR LOCATION</scope>
</reference>
<evidence type="ECO:0000250" key="1">
    <source>
        <dbReference type="UniProtKB" id="Q8VCQ3"/>
    </source>
</evidence>
<evidence type="ECO:0000250" key="2">
    <source>
        <dbReference type="UniProtKB" id="Q9QYK3"/>
    </source>
</evidence>
<evidence type="ECO:0000255" key="3"/>
<evidence type="ECO:0000256" key="4">
    <source>
        <dbReference type="SAM" id="MobiDB-lite"/>
    </source>
</evidence>
<evidence type="ECO:0000269" key="5">
    <source>
    </source>
</evidence>
<evidence type="ECO:0000269" key="6">
    <source>
    </source>
</evidence>
<evidence type="ECO:0000269" key="7">
    <source>
    </source>
</evidence>
<evidence type="ECO:0000269" key="8">
    <source>
    </source>
</evidence>
<evidence type="ECO:0000269" key="9">
    <source>
    </source>
</evidence>
<evidence type="ECO:0000303" key="10">
    <source>
    </source>
</evidence>
<evidence type="ECO:0000303" key="11">
    <source>
    </source>
</evidence>
<evidence type="ECO:0000305" key="12"/>
<evidence type="ECO:0007744" key="13">
    <source>
    </source>
</evidence>
<evidence type="ECO:0007744" key="14">
    <source>
    </source>
</evidence>
<evidence type="ECO:0007744" key="15">
    <source>
    </source>
</evidence>
<evidence type="ECO:0007829" key="16">
    <source>
        <dbReference type="PDB" id="4ZEY"/>
    </source>
</evidence>
<accession>Q96F24</accession>
<accession>A6PW36</accession>
<accession>B4DWS0</accession>
<accession>Q86UR2</accession>
<accession>Q96NP6</accession>
<accession>Q9H0S9</accession>
<accession>Q9H2I2</accession>
<name>NRBF2_HUMAN</name>
<comment type="function">
    <text evidence="5">May modulate transcriptional activation by target nuclear receptors. Can act as transcriptional activator (in vitro).</text>
</comment>
<comment type="function">
    <text evidence="1 8 9">Involved in starvation-induced autophagy probably by its association with PI3K complex I (PI3KC3-C1). However, effects has been described variably. Involved in the induction of starvation-induced autophagy (PubMed:24785657). Stabilizes PI3KC3-C1 assembly and enhances ATG14-linked lipid kinase activity of PIK3C3 (By similarity). Proposed to negatively regulate basal and starvation-induced autophagy and to inhibit PIK3C3 activity by modulating interactions in PI3KC3-C1 (PubMed:25086043). May be involved in autophagosome biogenesis (PubMed:25086043). May play a role in neural progenitor cell survival during differentiation (By similarity).</text>
</comment>
<comment type="subunit">
    <text evidence="5 7 8 9">Interacts with PPARA, PPARD and PPARG. Interacts with RARA, RARG and RXRA in the presence of bound ligand (PubMed:15610520). Interacts with SCOC (PubMed:22354037). Associates with the PI3K complex I (PI3KC3-C1); the direct binding partner in the complex is reported variably as PIK3R4 or ATG14 (PubMed:24785657).</text>
</comment>
<comment type="interaction">
    <interactant intactId="EBI-2362014">
        <id>Q96F24</id>
    </interactant>
    <interactant intactId="EBI-747505">
        <id>Q8TAB5</id>
        <label>C1orf216</label>
    </interactant>
    <organismsDiffer>false</organismsDiffer>
    <experiments>3</experiments>
</comment>
<comment type="interaction">
    <interactant intactId="EBI-2362014">
        <id>Q96F24</id>
    </interactant>
    <interactant intactId="EBI-395261">
        <id>P24863</id>
        <label>CCNC</label>
    </interactant>
    <organismsDiffer>false</organismsDiffer>
    <experiments>3</experiments>
</comment>
<comment type="interaction">
    <interactant intactId="EBI-2362014">
        <id>Q96F24</id>
    </interactant>
    <interactant intactId="EBI-396137">
        <id>Q9UJX2</id>
        <label>CDC23</label>
    </interactant>
    <organismsDiffer>false</organismsDiffer>
    <experiments>3</experiments>
</comment>
<comment type="interaction">
    <interactant intactId="EBI-2362014">
        <id>Q96F24</id>
    </interactant>
    <interactant intactId="EBI-710124">
        <id>O60341</id>
        <label>KDM1A</label>
    </interactant>
    <organismsDiffer>false</organismsDiffer>
    <experiments>3</experiments>
</comment>
<comment type="interaction">
    <interactant intactId="EBI-2362014">
        <id>Q96F24</id>
    </interactant>
    <interactant intactId="EBI-1056470">
        <id>Q8NEB9</id>
        <label>PIK3C3</label>
    </interactant>
    <organismsDiffer>false</organismsDiffer>
    <experiments>14</experiments>
</comment>
<comment type="interaction">
    <interactant intactId="EBI-2362014">
        <id>Q96F24</id>
    </interactant>
    <interactant intactId="EBI-1046979">
        <id>Q99570</id>
        <label>PIK3R4</label>
    </interactant>
    <organismsDiffer>false</organismsDiffer>
    <experiments>15</experiments>
</comment>
<comment type="interaction">
    <interactant intactId="EBI-2362014">
        <id>Q96F24</id>
    </interactant>
    <interactant intactId="EBI-1383852">
        <id>P54646</id>
        <label>PRKAA2</label>
    </interactant>
    <organismsDiffer>false</organismsDiffer>
    <experiments>3</experiments>
</comment>
<comment type="subcellular location">
    <subcellularLocation>
        <location evidence="2">Nucleus</location>
    </subcellularLocation>
    <subcellularLocation>
        <location evidence="2">Cytoplasm</location>
    </subcellularLocation>
    <subcellularLocation>
        <location evidence="9">Cytoplasmic vesicle</location>
    </subcellularLocation>
    <subcellularLocation>
        <location evidence="12">Cytoplasmic vesicle</location>
        <location evidence="12">Autophagosome</location>
    </subcellularLocation>
</comment>
<comment type="alternative products">
    <event type="alternative splicing"/>
    <isoform>
        <id>Q96F24-1</id>
        <name>1</name>
        <name>COPR2</name>
        <name>Comodulator of PPAR and RXR 2</name>
        <sequence type="displayed"/>
    </isoform>
    <isoform>
        <id>Q96F24-2</id>
        <name>2</name>
        <name>COPR1</name>
        <name>Comodulator of PPAR and RXR 1</name>
        <sequence type="described" ref="VSP_018488"/>
    </isoform>
    <isoform>
        <id>Q96F24-3</id>
        <name>3</name>
        <sequence type="described" ref="VSP_054555"/>
    </isoform>
</comment>
<comment type="tissue specificity">
    <text evidence="5 6">Detected in keratinocytes, liver and placenta (PubMed:15610520). Expressed in a subset of cells in pediatric medulloblastoma (PubMed:18619852).</text>
</comment>
<comment type="sequence caution" evidence="12">
    <conflict type="frameshift">
        <sequence resource="EMBL-CDS" id="AAG44735"/>
    </conflict>
</comment>